<keyword id="KW-0963">Cytoplasm</keyword>
<keyword id="KW-0489">Methyltransferase</keyword>
<keyword id="KW-0949">S-adenosyl-L-methionine</keyword>
<keyword id="KW-0808">Transferase</keyword>
<keyword id="KW-0819">tRNA processing</keyword>
<comment type="function">
    <text evidence="1">Specifically methylates guanosine-37 in various tRNAs.</text>
</comment>
<comment type="catalytic activity">
    <reaction evidence="1">
        <text>guanosine(37) in tRNA + S-adenosyl-L-methionine = N(1)-methylguanosine(37) in tRNA + S-adenosyl-L-homocysteine + H(+)</text>
        <dbReference type="Rhea" id="RHEA:36899"/>
        <dbReference type="Rhea" id="RHEA-COMP:10145"/>
        <dbReference type="Rhea" id="RHEA-COMP:10147"/>
        <dbReference type="ChEBI" id="CHEBI:15378"/>
        <dbReference type="ChEBI" id="CHEBI:57856"/>
        <dbReference type="ChEBI" id="CHEBI:59789"/>
        <dbReference type="ChEBI" id="CHEBI:73542"/>
        <dbReference type="ChEBI" id="CHEBI:74269"/>
        <dbReference type="EC" id="2.1.1.228"/>
    </reaction>
</comment>
<comment type="subunit">
    <text evidence="1">Homodimer.</text>
</comment>
<comment type="subcellular location">
    <subcellularLocation>
        <location evidence="1">Cytoplasm</location>
    </subcellularLocation>
</comment>
<comment type="similarity">
    <text evidence="1">Belongs to the RNA methyltransferase TrmD family.</text>
</comment>
<dbReference type="EC" id="2.1.1.228" evidence="1"/>
<dbReference type="EMBL" id="CP000766">
    <property type="protein sequence ID" value="ABY72104.1"/>
    <property type="molecule type" value="Genomic_DNA"/>
</dbReference>
<dbReference type="RefSeq" id="WP_012150369.1">
    <property type="nucleotide sequence ID" value="NC_010263.3"/>
</dbReference>
<dbReference type="SMR" id="B0BW78"/>
<dbReference type="GeneID" id="79936944"/>
<dbReference type="KEGG" id="rrj:RrIowa_0191"/>
<dbReference type="eggNOG" id="COG0336">
    <property type="taxonomic scope" value="Bacteria"/>
</dbReference>
<dbReference type="HOGENOM" id="CLU_047363_0_1_5"/>
<dbReference type="Proteomes" id="UP000000796">
    <property type="component" value="Chromosome"/>
</dbReference>
<dbReference type="GO" id="GO:0005829">
    <property type="term" value="C:cytosol"/>
    <property type="evidence" value="ECO:0007669"/>
    <property type="project" value="TreeGrafter"/>
</dbReference>
<dbReference type="GO" id="GO:0052906">
    <property type="term" value="F:tRNA (guanine(37)-N1)-methyltransferase activity"/>
    <property type="evidence" value="ECO:0007669"/>
    <property type="project" value="UniProtKB-UniRule"/>
</dbReference>
<dbReference type="GO" id="GO:0002939">
    <property type="term" value="P:tRNA N1-guanine methylation"/>
    <property type="evidence" value="ECO:0007669"/>
    <property type="project" value="TreeGrafter"/>
</dbReference>
<dbReference type="CDD" id="cd18080">
    <property type="entry name" value="TrmD-like"/>
    <property type="match status" value="1"/>
</dbReference>
<dbReference type="Gene3D" id="3.40.1280.10">
    <property type="match status" value="1"/>
</dbReference>
<dbReference type="Gene3D" id="1.10.1270.20">
    <property type="entry name" value="tRNA(m1g37)methyltransferase, domain 2"/>
    <property type="match status" value="1"/>
</dbReference>
<dbReference type="HAMAP" id="MF_00605">
    <property type="entry name" value="TrmD"/>
    <property type="match status" value="1"/>
</dbReference>
<dbReference type="InterPro" id="IPR029028">
    <property type="entry name" value="Alpha/beta_knot_MTases"/>
</dbReference>
<dbReference type="InterPro" id="IPR023148">
    <property type="entry name" value="tRNA_m1G_MeTrfase_C_sf"/>
</dbReference>
<dbReference type="InterPro" id="IPR002649">
    <property type="entry name" value="tRNA_m1G_MeTrfase_TrmD"/>
</dbReference>
<dbReference type="InterPro" id="IPR029026">
    <property type="entry name" value="tRNA_m1G_MTases_N"/>
</dbReference>
<dbReference type="InterPro" id="IPR016009">
    <property type="entry name" value="tRNA_MeTrfase_TRMD/TRM10"/>
</dbReference>
<dbReference type="NCBIfam" id="NF000648">
    <property type="entry name" value="PRK00026.1"/>
    <property type="match status" value="1"/>
</dbReference>
<dbReference type="NCBIfam" id="TIGR00088">
    <property type="entry name" value="trmD"/>
    <property type="match status" value="1"/>
</dbReference>
<dbReference type="PANTHER" id="PTHR46417">
    <property type="entry name" value="TRNA (GUANINE-N(1)-)-METHYLTRANSFERASE"/>
    <property type="match status" value="1"/>
</dbReference>
<dbReference type="PANTHER" id="PTHR46417:SF1">
    <property type="entry name" value="TRNA (GUANINE-N(1)-)-METHYLTRANSFERASE"/>
    <property type="match status" value="1"/>
</dbReference>
<dbReference type="Pfam" id="PF01746">
    <property type="entry name" value="tRNA_m1G_MT"/>
    <property type="match status" value="1"/>
</dbReference>
<dbReference type="PIRSF" id="PIRSF000386">
    <property type="entry name" value="tRNA_mtase"/>
    <property type="match status" value="1"/>
</dbReference>
<dbReference type="SUPFAM" id="SSF75217">
    <property type="entry name" value="alpha/beta knot"/>
    <property type="match status" value="1"/>
</dbReference>
<reference key="1">
    <citation type="journal article" date="2008" name="Infect. Immun.">
        <title>Genomic comparison of virulent Rickettsia rickettsii Sheila Smith and avirulent Rickettsia rickettsii Iowa.</title>
        <authorList>
            <person name="Ellison D.W."/>
            <person name="Clark T.R."/>
            <person name="Sturdevant D.E."/>
            <person name="Virtaneva K."/>
            <person name="Porcella S.F."/>
            <person name="Hackstadt T."/>
        </authorList>
    </citation>
    <scope>NUCLEOTIDE SEQUENCE [LARGE SCALE GENOMIC DNA]</scope>
    <source>
        <strain>Iowa</strain>
    </source>
</reference>
<proteinExistence type="inferred from homology"/>
<sequence length="234" mass="26353">MSILHATILTVFPEMFPGTLGHSLAGQALNKNIWSYDVINIRDFGLTKHKNIDDEAYGGGNGLIMRPDVLGSSIDHALALNPNAEMYYPSPRGRVFTQSFAKEMLKNKNLIFLCGRYEGIDERVIEEYNVKEISVGDYILSGGEIPTLTILDCLIRLLPGVLMNQNTLSSESFEEDGEFKGGLECSLYTRPEIWRNRAVPSVLLSGNHRLINEWKKAQSHMITKLRRPELLKDL</sequence>
<gene>
    <name evidence="1" type="primary">trmD</name>
    <name type="ordered locus">RrIowa_0191</name>
</gene>
<accession>B0BW78</accession>
<name>TRMD_RICRO</name>
<evidence type="ECO:0000255" key="1">
    <source>
        <dbReference type="HAMAP-Rule" id="MF_00605"/>
    </source>
</evidence>
<protein>
    <recommendedName>
        <fullName evidence="1">tRNA (guanine-N(1)-)-methyltransferase</fullName>
        <ecNumber evidence="1">2.1.1.228</ecNumber>
    </recommendedName>
    <alternativeName>
        <fullName evidence="1">M1G-methyltransferase</fullName>
    </alternativeName>
    <alternativeName>
        <fullName evidence="1">tRNA [GM37] methyltransferase</fullName>
    </alternativeName>
</protein>
<organism>
    <name type="scientific">Rickettsia rickettsii (strain Iowa)</name>
    <dbReference type="NCBI Taxonomy" id="452659"/>
    <lineage>
        <taxon>Bacteria</taxon>
        <taxon>Pseudomonadati</taxon>
        <taxon>Pseudomonadota</taxon>
        <taxon>Alphaproteobacteria</taxon>
        <taxon>Rickettsiales</taxon>
        <taxon>Rickettsiaceae</taxon>
        <taxon>Rickettsieae</taxon>
        <taxon>Rickettsia</taxon>
        <taxon>spotted fever group</taxon>
    </lineage>
</organism>
<feature type="chain" id="PRO_1000082531" description="tRNA (guanine-N(1)-)-methyltransferase">
    <location>
        <begin position="1"/>
        <end position="234"/>
    </location>
</feature>
<feature type="binding site" evidence="1">
    <location>
        <position position="115"/>
    </location>
    <ligand>
        <name>S-adenosyl-L-methionine</name>
        <dbReference type="ChEBI" id="CHEBI:59789"/>
    </ligand>
</feature>
<feature type="binding site" evidence="1">
    <location>
        <begin position="135"/>
        <end position="140"/>
    </location>
    <ligand>
        <name>S-adenosyl-L-methionine</name>
        <dbReference type="ChEBI" id="CHEBI:59789"/>
    </ligand>
</feature>